<dbReference type="EMBL" id="CP000577">
    <property type="protein sequence ID" value="ABN77928.1"/>
    <property type="molecule type" value="Genomic_DNA"/>
</dbReference>
<dbReference type="RefSeq" id="WP_002721614.1">
    <property type="nucleotide sequence ID" value="NC_009049.1"/>
</dbReference>
<dbReference type="SMR" id="A3PNL2"/>
<dbReference type="KEGG" id="rsh:Rsph17029_2826"/>
<dbReference type="HOGENOM" id="CLU_006301_10_1_5"/>
<dbReference type="GO" id="GO:0005829">
    <property type="term" value="C:cytosol"/>
    <property type="evidence" value="ECO:0007669"/>
    <property type="project" value="TreeGrafter"/>
</dbReference>
<dbReference type="GO" id="GO:0005525">
    <property type="term" value="F:GTP binding"/>
    <property type="evidence" value="ECO:0007669"/>
    <property type="project" value="UniProtKB-KW"/>
</dbReference>
<dbReference type="GO" id="GO:0003924">
    <property type="term" value="F:GTPase activity"/>
    <property type="evidence" value="ECO:0007669"/>
    <property type="project" value="UniProtKB-UniRule"/>
</dbReference>
<dbReference type="GO" id="GO:0003743">
    <property type="term" value="F:translation initiation factor activity"/>
    <property type="evidence" value="ECO:0007669"/>
    <property type="project" value="UniProtKB-UniRule"/>
</dbReference>
<dbReference type="CDD" id="cd01887">
    <property type="entry name" value="IF2_eIF5B"/>
    <property type="match status" value="1"/>
</dbReference>
<dbReference type="CDD" id="cd03702">
    <property type="entry name" value="IF2_mtIF2_II"/>
    <property type="match status" value="1"/>
</dbReference>
<dbReference type="CDD" id="cd03692">
    <property type="entry name" value="mtIF2_IVc"/>
    <property type="match status" value="1"/>
</dbReference>
<dbReference type="FunFam" id="2.40.30.10:FF:000007">
    <property type="entry name" value="Translation initiation factor IF-2"/>
    <property type="match status" value="1"/>
</dbReference>
<dbReference type="FunFam" id="2.40.30.10:FF:000008">
    <property type="entry name" value="Translation initiation factor IF-2"/>
    <property type="match status" value="1"/>
</dbReference>
<dbReference type="FunFam" id="3.40.50.10050:FF:000001">
    <property type="entry name" value="Translation initiation factor IF-2"/>
    <property type="match status" value="1"/>
</dbReference>
<dbReference type="FunFam" id="3.40.50.300:FF:000019">
    <property type="entry name" value="Translation initiation factor IF-2"/>
    <property type="match status" value="1"/>
</dbReference>
<dbReference type="Gene3D" id="3.40.50.300">
    <property type="entry name" value="P-loop containing nucleotide triphosphate hydrolases"/>
    <property type="match status" value="1"/>
</dbReference>
<dbReference type="Gene3D" id="2.40.30.10">
    <property type="entry name" value="Translation factors"/>
    <property type="match status" value="2"/>
</dbReference>
<dbReference type="Gene3D" id="3.40.50.10050">
    <property type="entry name" value="Translation initiation factor IF- 2, domain 3"/>
    <property type="match status" value="1"/>
</dbReference>
<dbReference type="HAMAP" id="MF_00100_B">
    <property type="entry name" value="IF_2_B"/>
    <property type="match status" value="1"/>
</dbReference>
<dbReference type="InterPro" id="IPR053905">
    <property type="entry name" value="EF-G-like_DII"/>
</dbReference>
<dbReference type="InterPro" id="IPR013575">
    <property type="entry name" value="IF2_assoc_dom_bac"/>
</dbReference>
<dbReference type="InterPro" id="IPR044145">
    <property type="entry name" value="IF2_II"/>
</dbReference>
<dbReference type="InterPro" id="IPR006847">
    <property type="entry name" value="IF2_N"/>
</dbReference>
<dbReference type="InterPro" id="IPR027417">
    <property type="entry name" value="P-loop_NTPase"/>
</dbReference>
<dbReference type="InterPro" id="IPR005225">
    <property type="entry name" value="Small_GTP-bd"/>
</dbReference>
<dbReference type="InterPro" id="IPR000795">
    <property type="entry name" value="T_Tr_GTP-bd_dom"/>
</dbReference>
<dbReference type="InterPro" id="IPR000178">
    <property type="entry name" value="TF_IF2_bacterial-like"/>
</dbReference>
<dbReference type="InterPro" id="IPR015760">
    <property type="entry name" value="TIF_IF2"/>
</dbReference>
<dbReference type="InterPro" id="IPR023115">
    <property type="entry name" value="TIF_IF2_dom3"/>
</dbReference>
<dbReference type="InterPro" id="IPR036925">
    <property type="entry name" value="TIF_IF2_dom3_sf"/>
</dbReference>
<dbReference type="InterPro" id="IPR009000">
    <property type="entry name" value="Transl_B-barrel_sf"/>
</dbReference>
<dbReference type="NCBIfam" id="TIGR00487">
    <property type="entry name" value="IF-2"/>
    <property type="match status" value="1"/>
</dbReference>
<dbReference type="NCBIfam" id="TIGR00231">
    <property type="entry name" value="small_GTP"/>
    <property type="match status" value="1"/>
</dbReference>
<dbReference type="PANTHER" id="PTHR43381:SF5">
    <property type="entry name" value="TR-TYPE G DOMAIN-CONTAINING PROTEIN"/>
    <property type="match status" value="1"/>
</dbReference>
<dbReference type="PANTHER" id="PTHR43381">
    <property type="entry name" value="TRANSLATION INITIATION FACTOR IF-2-RELATED"/>
    <property type="match status" value="1"/>
</dbReference>
<dbReference type="Pfam" id="PF22042">
    <property type="entry name" value="EF-G_D2"/>
    <property type="match status" value="1"/>
</dbReference>
<dbReference type="Pfam" id="PF00009">
    <property type="entry name" value="GTP_EFTU"/>
    <property type="match status" value="1"/>
</dbReference>
<dbReference type="Pfam" id="PF11987">
    <property type="entry name" value="IF-2"/>
    <property type="match status" value="1"/>
</dbReference>
<dbReference type="Pfam" id="PF08364">
    <property type="entry name" value="IF2_assoc"/>
    <property type="match status" value="1"/>
</dbReference>
<dbReference type="Pfam" id="PF04760">
    <property type="entry name" value="IF2_N"/>
    <property type="match status" value="1"/>
</dbReference>
<dbReference type="SUPFAM" id="SSF52156">
    <property type="entry name" value="Initiation factor IF2/eIF5b, domain 3"/>
    <property type="match status" value="1"/>
</dbReference>
<dbReference type="SUPFAM" id="SSF52540">
    <property type="entry name" value="P-loop containing nucleoside triphosphate hydrolases"/>
    <property type="match status" value="1"/>
</dbReference>
<dbReference type="SUPFAM" id="SSF50447">
    <property type="entry name" value="Translation proteins"/>
    <property type="match status" value="2"/>
</dbReference>
<dbReference type="PROSITE" id="PS51722">
    <property type="entry name" value="G_TR_2"/>
    <property type="match status" value="1"/>
</dbReference>
<dbReference type="PROSITE" id="PS01176">
    <property type="entry name" value="IF2"/>
    <property type="match status" value="1"/>
</dbReference>
<sequence>MSDTDGKKPLGLGGGSRSGQVKQSFSHGRTKSVLVETKRKRVVVPKPGASGSSTTTSSPSHLGDPAKRPAGISDAEMERRLAALRAAKLREVEDAKRRADEERQREEERQRRREELEAKEREERERAEALRQKAEDEERARREAEEATRRAEEAKRAPAPAAPQPAPAESRASAPPSAKPGLPPSRKEREREADRDRTTKKDDSRRSGKLTLNEALSGEGGRTRSLAAMKRKQEKARQKAMGFGHKAEKQVRDVQLPETILVQELANRMAERAADVVKALMKMGMMVTMNQSIDADTAELVIEEFGHRAVRVSDADVEHVIDTVEDKAEDLQPRPPIITIMGHVDHGKTSLLDAIRKTSVVSGEAGGITQHIGAYQVKTESGAVLTFLDTPGHAAFTSMRARGAQVTDIVVLVVAADDAVMPQTVEAIKHAKAAKVPMIVAINKIDKPDADPNKVRTDLLQHEVIVEKMSGDVLDVEVSAKTGLGLDELLENIALQAEILDLRANPSRQAQGAVIEAKLDVGRGPVATVLVQYGTLKRGDIFVVGQQWGKVRALINDKGERVDEAGPSVPVEVLGLNGTPEAGDVLNVVETEAQAREIADYREKAARDKRAAAGAATTLEQLMAKAKADADVAELPVVIKADVQGSAEAIVQALEKVGNDEVRVRVLHYGVGAITETDITLAEASQAAVIGFNVRANASARQAANQKSVEIRYYSVIYDLVDDVKKAASGLLKAEVREHFIGYAQIKEVFRITGVGNVAGCIVTEGVARRSAGVRLLRDNVVIHEGTLKTLKRFKDEVKEVQSGQECGMAFERYEDIRPGDVIEIFEREEVQRKLA</sequence>
<protein>
    <recommendedName>
        <fullName evidence="2">Translation initiation factor IF-2</fullName>
    </recommendedName>
</protein>
<proteinExistence type="inferred from homology"/>
<accession>A3PNL2</accession>
<reference key="1">
    <citation type="submission" date="2007-02" db="EMBL/GenBank/DDBJ databases">
        <title>Complete sequence of chromosome 1 of Rhodobacter sphaeroides ATCC 17029.</title>
        <authorList>
            <person name="Copeland A."/>
            <person name="Lucas S."/>
            <person name="Lapidus A."/>
            <person name="Barry K."/>
            <person name="Detter J.C."/>
            <person name="Glavina del Rio T."/>
            <person name="Hammon N."/>
            <person name="Israni S."/>
            <person name="Dalin E."/>
            <person name="Tice H."/>
            <person name="Pitluck S."/>
            <person name="Kiss H."/>
            <person name="Brettin T."/>
            <person name="Bruce D."/>
            <person name="Han C."/>
            <person name="Tapia R."/>
            <person name="Gilna P."/>
            <person name="Schmutz J."/>
            <person name="Larimer F."/>
            <person name="Land M."/>
            <person name="Hauser L."/>
            <person name="Kyrpides N."/>
            <person name="Mikhailova N."/>
            <person name="Richardson P."/>
            <person name="Mackenzie C."/>
            <person name="Choudhary M."/>
            <person name="Donohue T.J."/>
            <person name="Kaplan S."/>
        </authorList>
    </citation>
    <scope>NUCLEOTIDE SEQUENCE [LARGE SCALE GENOMIC DNA]</scope>
    <source>
        <strain>ATCC 17029 / ATH 2.4.9</strain>
    </source>
</reference>
<gene>
    <name evidence="2" type="primary">infB</name>
    <name type="ordered locus">Rsph17029_2826</name>
</gene>
<keyword id="KW-0963">Cytoplasm</keyword>
<keyword id="KW-0342">GTP-binding</keyword>
<keyword id="KW-0396">Initiation factor</keyword>
<keyword id="KW-0547">Nucleotide-binding</keyword>
<keyword id="KW-0648">Protein biosynthesis</keyword>
<evidence type="ECO:0000250" key="1"/>
<evidence type="ECO:0000255" key="2">
    <source>
        <dbReference type="HAMAP-Rule" id="MF_00100"/>
    </source>
</evidence>
<evidence type="ECO:0000256" key="3">
    <source>
        <dbReference type="SAM" id="MobiDB-lite"/>
    </source>
</evidence>
<feature type="chain" id="PRO_1000008318" description="Translation initiation factor IF-2">
    <location>
        <begin position="1"/>
        <end position="836"/>
    </location>
</feature>
<feature type="domain" description="tr-type G">
    <location>
        <begin position="333"/>
        <end position="501"/>
    </location>
</feature>
<feature type="region of interest" description="Disordered" evidence="3">
    <location>
        <begin position="1"/>
        <end position="234"/>
    </location>
</feature>
<feature type="region of interest" description="G1" evidence="1">
    <location>
        <begin position="342"/>
        <end position="349"/>
    </location>
</feature>
<feature type="region of interest" description="G2" evidence="1">
    <location>
        <begin position="367"/>
        <end position="371"/>
    </location>
</feature>
<feature type="region of interest" description="G3" evidence="1">
    <location>
        <begin position="389"/>
        <end position="392"/>
    </location>
</feature>
<feature type="region of interest" description="G4" evidence="1">
    <location>
        <begin position="443"/>
        <end position="446"/>
    </location>
</feature>
<feature type="region of interest" description="G5" evidence="1">
    <location>
        <begin position="479"/>
        <end position="481"/>
    </location>
</feature>
<feature type="compositionally biased region" description="Polar residues" evidence="3">
    <location>
        <begin position="18"/>
        <end position="27"/>
    </location>
</feature>
<feature type="compositionally biased region" description="Low complexity" evidence="3">
    <location>
        <begin position="50"/>
        <end position="60"/>
    </location>
</feature>
<feature type="compositionally biased region" description="Basic and acidic residues" evidence="3">
    <location>
        <begin position="88"/>
        <end position="156"/>
    </location>
</feature>
<feature type="compositionally biased region" description="Low complexity" evidence="3">
    <location>
        <begin position="167"/>
        <end position="176"/>
    </location>
</feature>
<feature type="compositionally biased region" description="Basic and acidic residues" evidence="3">
    <location>
        <begin position="185"/>
        <end position="206"/>
    </location>
</feature>
<feature type="binding site" evidence="2">
    <location>
        <begin position="342"/>
        <end position="349"/>
    </location>
    <ligand>
        <name>GTP</name>
        <dbReference type="ChEBI" id="CHEBI:37565"/>
    </ligand>
</feature>
<feature type="binding site" evidence="2">
    <location>
        <begin position="389"/>
        <end position="393"/>
    </location>
    <ligand>
        <name>GTP</name>
        <dbReference type="ChEBI" id="CHEBI:37565"/>
    </ligand>
</feature>
<feature type="binding site" evidence="2">
    <location>
        <begin position="443"/>
        <end position="446"/>
    </location>
    <ligand>
        <name>GTP</name>
        <dbReference type="ChEBI" id="CHEBI:37565"/>
    </ligand>
</feature>
<name>IF2_CERS1</name>
<comment type="function">
    <text evidence="2">One of the essential components for the initiation of protein synthesis. Protects formylmethionyl-tRNA from spontaneous hydrolysis and promotes its binding to the 30S ribosomal subunits. Also involved in the hydrolysis of GTP during the formation of the 70S ribosomal complex.</text>
</comment>
<comment type="subcellular location">
    <subcellularLocation>
        <location evidence="2">Cytoplasm</location>
    </subcellularLocation>
</comment>
<comment type="similarity">
    <text evidence="2">Belongs to the TRAFAC class translation factor GTPase superfamily. Classic translation factor GTPase family. IF-2 subfamily.</text>
</comment>
<organism>
    <name type="scientific">Cereibacter sphaeroides (strain ATCC 17029 / ATH 2.4.9)</name>
    <name type="common">Rhodobacter sphaeroides</name>
    <dbReference type="NCBI Taxonomy" id="349101"/>
    <lineage>
        <taxon>Bacteria</taxon>
        <taxon>Pseudomonadati</taxon>
        <taxon>Pseudomonadota</taxon>
        <taxon>Alphaproteobacteria</taxon>
        <taxon>Rhodobacterales</taxon>
        <taxon>Paracoccaceae</taxon>
        <taxon>Cereibacter</taxon>
    </lineage>
</organism>